<proteinExistence type="evidence at protein level"/>
<organism>
    <name type="scientific">Homo sapiens</name>
    <name type="common">Human</name>
    <dbReference type="NCBI Taxonomy" id="9606"/>
    <lineage>
        <taxon>Eukaryota</taxon>
        <taxon>Metazoa</taxon>
        <taxon>Chordata</taxon>
        <taxon>Craniata</taxon>
        <taxon>Vertebrata</taxon>
        <taxon>Euteleostomi</taxon>
        <taxon>Mammalia</taxon>
        <taxon>Eutheria</taxon>
        <taxon>Euarchontoglires</taxon>
        <taxon>Primates</taxon>
        <taxon>Haplorrhini</taxon>
        <taxon>Catarrhini</taxon>
        <taxon>Hominidae</taxon>
        <taxon>Homo</taxon>
    </lineage>
</organism>
<evidence type="ECO:0000250" key="1"/>
<evidence type="ECO:0000250" key="2">
    <source>
        <dbReference type="UniProtKB" id="O55207"/>
    </source>
</evidence>
<evidence type="ECO:0000250" key="3">
    <source>
        <dbReference type="UniProtKB" id="Q9D2G5"/>
    </source>
</evidence>
<evidence type="ECO:0000255" key="4">
    <source>
        <dbReference type="PROSITE-ProRule" id="PRU00176"/>
    </source>
</evidence>
<evidence type="ECO:0000255" key="5">
    <source>
        <dbReference type="PROSITE-ProRule" id="PRU00183"/>
    </source>
</evidence>
<evidence type="ECO:0000256" key="6">
    <source>
        <dbReference type="SAM" id="MobiDB-lite"/>
    </source>
</evidence>
<evidence type="ECO:0000269" key="7">
    <source>
    </source>
</evidence>
<evidence type="ECO:0000269" key="8">
    <source>
    </source>
</evidence>
<evidence type="ECO:0000303" key="9">
    <source ref="1"/>
</evidence>
<evidence type="ECO:0000305" key="10"/>
<evidence type="ECO:0007744" key="11">
    <source>
    </source>
</evidence>
<evidence type="ECO:0007744" key="12">
    <source>
    </source>
</evidence>
<evidence type="ECO:0007829" key="13">
    <source>
        <dbReference type="PDB" id="1UFW"/>
    </source>
</evidence>
<feature type="chain" id="PRO_0000209733" description="Synaptojanin-2">
    <location>
        <begin position="1"/>
        <end position="1496"/>
    </location>
</feature>
<feature type="domain" description="SAC" evidence="5">
    <location>
        <begin position="120"/>
        <end position="444"/>
    </location>
</feature>
<feature type="domain" description="RRM" evidence="4">
    <location>
        <begin position="889"/>
        <end position="968"/>
    </location>
</feature>
<feature type="region of interest" description="Catalytic" evidence="1">
    <location>
        <begin position="450"/>
        <end status="unknown"/>
    </location>
</feature>
<feature type="region of interest" description="Disordered" evidence="6">
    <location>
        <begin position="1027"/>
        <end position="1073"/>
    </location>
</feature>
<feature type="region of interest" description="Disordered" evidence="6">
    <location>
        <begin position="1085"/>
        <end position="1166"/>
    </location>
</feature>
<feature type="region of interest" description="Disordered" evidence="6">
    <location>
        <begin position="1190"/>
        <end position="1405"/>
    </location>
</feature>
<feature type="region of interest" description="Disordered" evidence="6">
    <location>
        <begin position="1427"/>
        <end position="1473"/>
    </location>
</feature>
<feature type="compositionally biased region" description="Pro residues" evidence="6">
    <location>
        <begin position="1101"/>
        <end position="1115"/>
    </location>
</feature>
<feature type="compositionally biased region" description="Polar residues" evidence="6">
    <location>
        <begin position="1124"/>
        <end position="1140"/>
    </location>
</feature>
<feature type="compositionally biased region" description="Pro residues" evidence="6">
    <location>
        <begin position="1221"/>
        <end position="1235"/>
    </location>
</feature>
<feature type="compositionally biased region" description="Pro residues" evidence="6">
    <location>
        <begin position="1319"/>
        <end position="1332"/>
    </location>
</feature>
<feature type="compositionally biased region" description="Low complexity" evidence="6">
    <location>
        <begin position="1340"/>
        <end position="1359"/>
    </location>
</feature>
<feature type="compositionally biased region" description="Polar residues" evidence="6">
    <location>
        <begin position="1383"/>
        <end position="1394"/>
    </location>
</feature>
<feature type="compositionally biased region" description="Polar residues" evidence="6">
    <location>
        <begin position="1427"/>
        <end position="1442"/>
    </location>
</feature>
<feature type="modified residue" description="Phosphoserine" evidence="11">
    <location>
        <position position="1124"/>
    </location>
</feature>
<feature type="modified residue" description="Phosphoserine" evidence="11 12">
    <location>
        <position position="1191"/>
    </location>
</feature>
<feature type="splice variant" id="VSP_012911" description="In isoform 2B1." evidence="10">
    <location>
        <begin position="1070"/>
        <end position="1114"/>
    </location>
</feature>
<feature type="splice variant" id="VSP_012912" description="In isoform 2A." evidence="9">
    <original>PLSPEEQFEQQTVHFTIGPPETSVEAPPVVTAPRVPPVPK</original>
    <variation>IVFCSRSQASQPCLLLQRHEFVRTVAAQRLASVDTSGSSV</variation>
    <location>
        <begin position="1249"/>
        <end position="1288"/>
    </location>
</feature>
<feature type="splice variant" id="VSP_012913" description="In isoform 2A." evidence="9">
    <location>
        <begin position="1289"/>
        <end position="1496"/>
    </location>
</feature>
<feature type="sequence variant" id="VAR_024507" description="In dbSNP:rs2502601." evidence="8">
    <original>E</original>
    <variation>G</variation>
    <location>
        <position position="1468"/>
    </location>
</feature>
<feature type="strand" evidence="13">
    <location>
        <begin position="891"/>
        <end position="898"/>
    </location>
</feature>
<feature type="helix" evidence="13">
    <location>
        <begin position="901"/>
        <end position="905"/>
    </location>
</feature>
<feature type="helix" evidence="13">
    <location>
        <begin position="909"/>
        <end position="922"/>
    </location>
</feature>
<feature type="strand" evidence="13">
    <location>
        <begin position="926"/>
        <end position="931"/>
    </location>
</feature>
<feature type="strand" evidence="13">
    <location>
        <begin position="934"/>
        <end position="938"/>
    </location>
</feature>
<feature type="helix" evidence="13">
    <location>
        <begin position="943"/>
        <end position="950"/>
    </location>
</feature>
<feature type="helix" evidence="13">
    <location>
        <begin position="951"/>
        <end position="953"/>
    </location>
</feature>
<feature type="strand" evidence="13">
    <location>
        <begin position="954"/>
        <end position="956"/>
    </location>
</feature>
<feature type="strand" evidence="13">
    <location>
        <begin position="959"/>
        <end position="963"/>
    </location>
</feature>
<sequence>MALSKGLRLLGRLGAEGDCSVLLEARGRDDCLLFEAGTVATLAPEEKEVIKGQYGKLTDAYGCLGELRLKSGGTSLSFLVLVTGCTSVGRIPDAEIYKITATDFYPLQEEAKEEERLIALKKILSSGVFYFSWPNDGSRFDLTVRTQKQGDDSSEWGNSFFWNQLLHVPLRQHQVSCCDWLLKIICGVVTIRTVYASHKQAKACLVSRVSCERTGTRFHTRGVNDDGHVSNFVETEQMIYMDDGVSSFVQIRGSVPLFWEQPGLQVGSHHLRLHRGLEANAPAFDRHMVLLKEQYGQQVVVNLLGSRGGEEVLNRAFKKLLWASCHAGDTPMINFDFHQFAKGGKLEKLETLLRPQLKLHWEDFDVFTKGENVSPRFQKGTLRMNCLDCLDRTNTVQSFIALEVLHLQLKTLGLSSKPIVDRFVESFKAMWSLNGHSLSKVFTGSRALEGKAKVGKLKDGARSMSRTIQSNFFDGVKQEAIKLLLVGDVYGEEVADKGGMLLDSTALLVTPRILKAMTERQSEFTNFKRIRIAMGTWNVNGGKQFRSNVLRTAELTDWLLDSPQLSGATDSQDDSSPADIFAVGFEEMVELSAGNIVNASTTNKKMWGEQLQKAISRSHRYILLTSAQLVGVCLYIFVRPYHVPFIRDVAIDTVKTGMGGKAGNKGAVGIRFQFHSTSFCFICSHLTAGQSQVKERNEDYKEITQKLCFPMGRNVFSHDYVFWCGDFNYRIDLTYEEVFYFVKRQDWKKLLEFDQLQLQKSSGKIFKDFHEGAINFGPTYKYDVGSAAYDTSDKCRTPAWTDRVLWWRKKHPFDKTAGELNLLDSDLDVDTKVRHTWSPGALQYYGRAELQASDHRPVLAIVEVEVQEVDVGARERVFQEVSSFQGPLDATVVVNLQSPTLEEKNEFPEDLRTELMQTLGSYGTIVLVRINQGQMLVTFADSHSALSVLDVDGMKVKGRAVKIRPKTKDWLKGLREEIIRKRDSMAPVSPTANSCLLEENFDFTSLDYESEGDILEDDEDYLVDEFNQPGVSDSELGGDDLSDVPGPTALAPPSKSPALTKKKQHPTYKDDADLVELKRELEAVGEFRHRSPSRSLSVPNRPRPPQPPQRPPPPTGLMVKKSASDASISSGTHGQYSILQTARLLPGAPQQPPKARTGISKPYNVKQIKTTNAQEAEAAIRCLLEARGGASEEALSAVAPRDLEASSEPEPTPGAAKPETPQAPPLLPRRPPPRVPAIKKPTLRRTGKPLSPEEQFEQQTVHFTIGPPETSVEAPPVVTAPRVPPVPKPRTFQPGKAAERPSHRKPASDEAPPGAGASVPPPLEAPPLVPKVPPRRKKSAPAAFHLQVLQSNSQLLQGLTYNSSDSPSGHPPAAGTVFPQGDFLSTSSATSPDSDGTKAMKPEAAPLLGDYQDPFWNLLHHPKLLNNTWLSKSSDPLDSGTRSPKRDPIDPVSAGASAAKAELPPDHEHKTLGHWVTISDQEKRTALQVFDPLAKT</sequence>
<reference key="1">
    <citation type="submission" date="2002-09" db="EMBL/GenBank/DDBJ databases">
        <title>cDNA cloning of human SH3 domain-containing proteins, synaptojanin 2A.</title>
        <authorList>
            <person name="Jeong S.-Y."/>
            <person name="Youle R.J."/>
        </authorList>
    </citation>
    <scope>NUCLEOTIDE SEQUENCE [MRNA] (ISOFORM 2A)</scope>
</reference>
<reference key="2">
    <citation type="journal article" date="2000" name="Curr. Biol.">
        <title>Synaptojanin 2, a novel Rac1 effector that regulates clathrin-mediated endocytosis.</title>
        <authorList>
            <person name="Malecz N."/>
            <person name="McCabe P.C."/>
            <person name="Spaargaren C."/>
            <person name="Qiu R.-G."/>
            <person name="Chuang Y.-Y."/>
            <person name="Symons M."/>
        </authorList>
    </citation>
    <scope>NUCLEOTIDE SEQUENCE [MRNA] (ISOFORM 2B2)</scope>
    <scope>SUBCELLULAR LOCATION</scope>
</reference>
<reference key="3">
    <citation type="journal article" date="2003" name="Nature">
        <title>The DNA sequence and analysis of human chromosome 6.</title>
        <authorList>
            <person name="Mungall A.J."/>
            <person name="Palmer S.A."/>
            <person name="Sims S.K."/>
            <person name="Edwards C.A."/>
            <person name="Ashurst J.L."/>
            <person name="Wilming L."/>
            <person name="Jones M.C."/>
            <person name="Horton R."/>
            <person name="Hunt S.E."/>
            <person name="Scott C.E."/>
            <person name="Gilbert J.G.R."/>
            <person name="Clamp M.E."/>
            <person name="Bethel G."/>
            <person name="Milne S."/>
            <person name="Ainscough R."/>
            <person name="Almeida J.P."/>
            <person name="Ambrose K.D."/>
            <person name="Andrews T.D."/>
            <person name="Ashwell R.I.S."/>
            <person name="Babbage A.K."/>
            <person name="Bagguley C.L."/>
            <person name="Bailey J."/>
            <person name="Banerjee R."/>
            <person name="Barker D.J."/>
            <person name="Barlow K.F."/>
            <person name="Bates K."/>
            <person name="Beare D.M."/>
            <person name="Beasley H."/>
            <person name="Beasley O."/>
            <person name="Bird C.P."/>
            <person name="Blakey S.E."/>
            <person name="Bray-Allen S."/>
            <person name="Brook J."/>
            <person name="Brown A.J."/>
            <person name="Brown J.Y."/>
            <person name="Burford D.C."/>
            <person name="Burrill W."/>
            <person name="Burton J."/>
            <person name="Carder C."/>
            <person name="Carter N.P."/>
            <person name="Chapman J.C."/>
            <person name="Clark S.Y."/>
            <person name="Clark G."/>
            <person name="Clee C.M."/>
            <person name="Clegg S."/>
            <person name="Cobley V."/>
            <person name="Collier R.E."/>
            <person name="Collins J.E."/>
            <person name="Colman L.K."/>
            <person name="Corby N.R."/>
            <person name="Coville G.J."/>
            <person name="Culley K.M."/>
            <person name="Dhami P."/>
            <person name="Davies J."/>
            <person name="Dunn M."/>
            <person name="Earthrowl M.E."/>
            <person name="Ellington A.E."/>
            <person name="Evans K.A."/>
            <person name="Faulkner L."/>
            <person name="Francis M.D."/>
            <person name="Frankish A."/>
            <person name="Frankland J."/>
            <person name="French L."/>
            <person name="Garner P."/>
            <person name="Garnett J."/>
            <person name="Ghori M.J."/>
            <person name="Gilby L.M."/>
            <person name="Gillson C.J."/>
            <person name="Glithero R.J."/>
            <person name="Grafham D.V."/>
            <person name="Grant M."/>
            <person name="Gribble S."/>
            <person name="Griffiths C."/>
            <person name="Griffiths M.N.D."/>
            <person name="Hall R."/>
            <person name="Halls K.S."/>
            <person name="Hammond S."/>
            <person name="Harley J.L."/>
            <person name="Hart E.A."/>
            <person name="Heath P.D."/>
            <person name="Heathcott R."/>
            <person name="Holmes S.J."/>
            <person name="Howden P.J."/>
            <person name="Howe K.L."/>
            <person name="Howell G.R."/>
            <person name="Huckle E."/>
            <person name="Humphray S.J."/>
            <person name="Humphries M.D."/>
            <person name="Hunt A.R."/>
            <person name="Johnson C.M."/>
            <person name="Joy A.A."/>
            <person name="Kay M."/>
            <person name="Keenan S.J."/>
            <person name="Kimberley A.M."/>
            <person name="King A."/>
            <person name="Laird G.K."/>
            <person name="Langford C."/>
            <person name="Lawlor S."/>
            <person name="Leongamornlert D.A."/>
            <person name="Leversha M."/>
            <person name="Lloyd C.R."/>
            <person name="Lloyd D.M."/>
            <person name="Loveland J.E."/>
            <person name="Lovell J."/>
            <person name="Martin S."/>
            <person name="Mashreghi-Mohammadi M."/>
            <person name="Maslen G.L."/>
            <person name="Matthews L."/>
            <person name="McCann O.T."/>
            <person name="McLaren S.J."/>
            <person name="McLay K."/>
            <person name="McMurray A."/>
            <person name="Moore M.J.F."/>
            <person name="Mullikin J.C."/>
            <person name="Niblett D."/>
            <person name="Nickerson T."/>
            <person name="Novik K.L."/>
            <person name="Oliver K."/>
            <person name="Overton-Larty E.K."/>
            <person name="Parker A."/>
            <person name="Patel R."/>
            <person name="Pearce A.V."/>
            <person name="Peck A.I."/>
            <person name="Phillimore B.J.C.T."/>
            <person name="Phillips S."/>
            <person name="Plumb R.W."/>
            <person name="Porter K.M."/>
            <person name="Ramsey Y."/>
            <person name="Ranby S.A."/>
            <person name="Rice C.M."/>
            <person name="Ross M.T."/>
            <person name="Searle S.M."/>
            <person name="Sehra H.K."/>
            <person name="Sheridan E."/>
            <person name="Skuce C.D."/>
            <person name="Smith S."/>
            <person name="Smith M."/>
            <person name="Spraggon L."/>
            <person name="Squares S.L."/>
            <person name="Steward C.A."/>
            <person name="Sycamore N."/>
            <person name="Tamlyn-Hall G."/>
            <person name="Tester J."/>
            <person name="Theaker A.J."/>
            <person name="Thomas D.W."/>
            <person name="Thorpe A."/>
            <person name="Tracey A."/>
            <person name="Tromans A."/>
            <person name="Tubby B."/>
            <person name="Wall M."/>
            <person name="Wallis J.M."/>
            <person name="West A.P."/>
            <person name="White S.S."/>
            <person name="Whitehead S.L."/>
            <person name="Whittaker H."/>
            <person name="Wild A."/>
            <person name="Willey D.J."/>
            <person name="Wilmer T.E."/>
            <person name="Wood J.M."/>
            <person name="Wray P.W."/>
            <person name="Wyatt J.C."/>
            <person name="Young L."/>
            <person name="Younger R.M."/>
            <person name="Bentley D.R."/>
            <person name="Coulson A."/>
            <person name="Durbin R.M."/>
            <person name="Hubbard T."/>
            <person name="Sulston J.E."/>
            <person name="Dunham I."/>
            <person name="Rogers J."/>
            <person name="Beck S."/>
        </authorList>
    </citation>
    <scope>NUCLEOTIDE SEQUENCE [LARGE SCALE GENOMIC DNA]</scope>
</reference>
<reference key="4">
    <citation type="journal article" date="2001" name="J. Biol. Chem.">
        <title>Identification and characterization of a synaptojanin 2 splice isoform predominantly expressed in nerve terminals.</title>
        <authorList>
            <person name="Nemoto Y."/>
            <person name="Wenk M.R."/>
            <person name="Watanabe M."/>
            <person name="Daniell L."/>
            <person name="Murakami T."/>
            <person name="Ringstad N."/>
            <person name="Yamada H."/>
            <person name="Takei K."/>
            <person name="De Camilli P."/>
        </authorList>
    </citation>
    <scope>NUCLEOTIDE SEQUENCE [MRNA] OF 54-1496 (ISOFORM 2B2)</scope>
    <source>
        <tissue>Brain</tissue>
    </source>
</reference>
<reference key="5">
    <citation type="journal article" date="1997" name="DNA Res.">
        <title>Prediction of the coding sequences of unidentified human genes. VII. The complete sequences of 100 new cDNA clones from brain which can code for large proteins in vitro.</title>
        <authorList>
            <person name="Nagase T."/>
            <person name="Ishikawa K."/>
            <person name="Nakajima D."/>
            <person name="Ohira M."/>
            <person name="Seki N."/>
            <person name="Miyajima N."/>
            <person name="Tanaka A."/>
            <person name="Kotani H."/>
            <person name="Nomura N."/>
            <person name="Ohara O."/>
        </authorList>
    </citation>
    <scope>NUCLEOTIDE SEQUENCE [LARGE SCALE MRNA] OF 54-1496 (ISOFORM 2B2)</scope>
    <source>
        <tissue>Brain</tissue>
    </source>
</reference>
<reference key="6">
    <citation type="journal article" date="2004" name="Genome Res.">
        <title>The status, quality, and expansion of the NIH full-length cDNA project: the Mammalian Gene Collection (MGC).</title>
        <authorList>
            <consortium name="The MGC Project Team"/>
        </authorList>
    </citation>
    <scope>NUCLEOTIDE SEQUENCE [LARGE SCALE MRNA] OF 647-1496 (ISOFORM 2B2)</scope>
    <scope>VARIANT GLY-1468</scope>
    <source>
        <tissue>Testis</tissue>
    </source>
</reference>
<reference key="7">
    <citation type="journal article" date="2009" name="Sci. Signal.">
        <title>Quantitative phosphoproteomic analysis of T cell receptor signaling reveals system-wide modulation of protein-protein interactions.</title>
        <authorList>
            <person name="Mayya V."/>
            <person name="Lundgren D.H."/>
            <person name="Hwang S.-I."/>
            <person name="Rezaul K."/>
            <person name="Wu L."/>
            <person name="Eng J.K."/>
            <person name="Rodionov V."/>
            <person name="Han D.K."/>
        </authorList>
    </citation>
    <scope>IDENTIFICATION BY MASS SPECTROMETRY [LARGE SCALE ANALYSIS]</scope>
    <source>
        <tissue>Leukemic T-cell</tissue>
    </source>
</reference>
<reference key="8">
    <citation type="journal article" date="2011" name="BMC Syst. Biol.">
        <title>Initial characterization of the human central proteome.</title>
        <authorList>
            <person name="Burkard T.R."/>
            <person name="Planyavsky M."/>
            <person name="Kaupe I."/>
            <person name="Breitwieser F.P."/>
            <person name="Buerckstuemmer T."/>
            <person name="Bennett K.L."/>
            <person name="Superti-Furga G."/>
            <person name="Colinge J."/>
        </authorList>
    </citation>
    <scope>IDENTIFICATION BY MASS SPECTROMETRY [LARGE SCALE ANALYSIS]</scope>
</reference>
<reference key="9">
    <citation type="journal article" date="2013" name="J. Proteome Res.">
        <title>Toward a comprehensive characterization of a human cancer cell phosphoproteome.</title>
        <authorList>
            <person name="Zhou H."/>
            <person name="Di Palma S."/>
            <person name="Preisinger C."/>
            <person name="Peng M."/>
            <person name="Polat A.N."/>
            <person name="Heck A.J."/>
            <person name="Mohammed S."/>
        </authorList>
    </citation>
    <scope>PHOSPHORYLATION [LARGE SCALE ANALYSIS] AT SER-1124 AND SER-1191</scope>
    <scope>IDENTIFICATION BY MASS SPECTROMETRY [LARGE SCALE ANALYSIS]</scope>
    <source>
        <tissue>Cervix carcinoma</tissue>
        <tissue>Erythroleukemia</tissue>
    </source>
</reference>
<reference key="10">
    <citation type="journal article" date="2014" name="J. Proteomics">
        <title>An enzyme assisted RP-RPLC approach for in-depth analysis of human liver phosphoproteome.</title>
        <authorList>
            <person name="Bian Y."/>
            <person name="Song C."/>
            <person name="Cheng K."/>
            <person name="Dong M."/>
            <person name="Wang F."/>
            <person name="Huang J."/>
            <person name="Sun D."/>
            <person name="Wang L."/>
            <person name="Ye M."/>
            <person name="Zou H."/>
        </authorList>
    </citation>
    <scope>PHOSPHORYLATION [LARGE SCALE ANALYSIS] AT SER-1191</scope>
    <scope>IDENTIFICATION BY MASS SPECTROMETRY [LARGE SCALE ANALYSIS]</scope>
    <source>
        <tissue>Liver</tissue>
    </source>
</reference>
<reference key="11">
    <citation type="submission" date="2003-12" db="PDB data bank">
        <title>Solution structure of RNP domain in synaptojanin 2.</title>
        <authorList>
            <consortium name="RIKEN structural genomics initiative (RSGI)"/>
        </authorList>
    </citation>
    <scope>STRUCTURE BY NMR OF 819-969</scope>
</reference>
<protein>
    <recommendedName>
        <fullName>Synaptojanin-2</fullName>
        <ecNumber evidence="3">3.1.3.36</ecNumber>
    </recommendedName>
    <alternativeName>
        <fullName>Synaptic inositol 1,4,5-trisphosphate 5-phosphatase 2</fullName>
    </alternativeName>
</protein>
<keyword id="KW-0002">3D-structure</keyword>
<keyword id="KW-0025">Alternative splicing</keyword>
<keyword id="KW-1003">Cell membrane</keyword>
<keyword id="KW-0966">Cell projection</keyword>
<keyword id="KW-0963">Cytoplasm</keyword>
<keyword id="KW-0206">Cytoskeleton</keyword>
<keyword id="KW-0378">Hydrolase</keyword>
<keyword id="KW-0443">Lipid metabolism</keyword>
<keyword id="KW-0472">Membrane</keyword>
<keyword id="KW-0597">Phosphoprotein</keyword>
<keyword id="KW-1267">Proteomics identification</keyword>
<keyword id="KW-1185">Reference proteome</keyword>
<keyword id="KW-0694">RNA-binding</keyword>
<keyword id="KW-0770">Synapse</keyword>
<name>SYNJ2_HUMAN</name>
<accession>O15056</accession>
<accession>Q5TA13</accession>
<accession>Q5TA16</accession>
<accession>Q5TA19</accession>
<accession>Q86XK0</accession>
<accession>Q8IZA8</accession>
<accession>Q9H226</accession>
<comment type="function">
    <text>Inositol 5-phosphatase which may be involved in distinct membrane trafficking and signal transduction pathways. May mediate the inhibitory effect of Rac1 on endocytosis.</text>
</comment>
<comment type="catalytic activity">
    <reaction evidence="3">
        <text>a 1,2-diacyl-sn-glycero-3-phospho-(1D-myo-inositol-4,5-bisphosphate) + H2O = a 1,2-diacyl-sn-glycero-3-phospho-(1D-myo-inositol 4-phosphate) + phosphate</text>
        <dbReference type="Rhea" id="RHEA:22764"/>
        <dbReference type="ChEBI" id="CHEBI:15377"/>
        <dbReference type="ChEBI" id="CHEBI:43474"/>
        <dbReference type="ChEBI" id="CHEBI:58178"/>
        <dbReference type="ChEBI" id="CHEBI:58456"/>
        <dbReference type="EC" id="3.1.3.36"/>
    </reaction>
</comment>
<comment type="subunit">
    <text>Binds to GRB2. Isoform 2A binds to SYNJ2BP/OMP25. Isoform 2B2 C-terminal proline-rich region binds to a variety of SH3 domain-containing proteins including SH3GL1, SH3GL2, SH3GL3 and GRB2.</text>
</comment>
<comment type="interaction">
    <interactant intactId="EBI-310513">
        <id>O15056</id>
    </interactant>
    <interactant intactId="EBI-401755">
        <id>P62993</id>
        <label>GRB2</label>
    </interactant>
    <organismsDiffer>false</organismsDiffer>
    <experiments>2</experiments>
</comment>
<comment type="interaction">
    <interactant intactId="EBI-310513">
        <id>O15056</id>
    </interactant>
    <interactant intactId="EBI-389883">
        <id>P16333</id>
        <label>NCK1</label>
    </interactant>
    <organismsDiffer>false</organismsDiffer>
    <experiments>3</experiments>
</comment>
<comment type="interaction">
    <interactant intactId="EBI-310513">
        <id>O15056</id>
    </interactant>
    <interactant intactId="EBI-346595">
        <id>Q96B97</id>
        <label>SH3KBP1</label>
    </interactant>
    <organismsDiffer>false</organismsDiffer>
    <experiments>6</experiments>
</comment>
<comment type="subcellular location">
    <subcellularLocation>
        <location evidence="7">Cytoplasm</location>
    </subcellularLocation>
    <subcellularLocation>
        <location evidence="7">Cell membrane</location>
    </subcellularLocation>
    <subcellularLocation>
        <location evidence="7">Membrane raft</location>
    </subcellularLocation>
    <subcellularLocation>
        <location evidence="2">Presynapse</location>
    </subcellularLocation>
    <subcellularLocation>
        <location evidence="2">Cytoplasm</location>
        <location evidence="2">Cytoskeleton</location>
    </subcellularLocation>
    <text evidence="7">Localizes at presynapse terminals in brain and at bundles of microtubules surrounding the nucleus in the elongating spermatids corresponding to the manchette (By similarity). Translocates from the cytoplasm to membrane ruffles in a RAC1-dependent manner (PubMed:11084340).</text>
</comment>
<comment type="alternative products">
    <event type="alternative splicing"/>
    <isoform>
        <id>O15056-1</id>
        <name>2B2</name>
        <sequence type="displayed"/>
    </isoform>
    <isoform>
        <id>O15056-2</id>
        <name>2B1</name>
        <sequence type="described" ref="VSP_012911"/>
    </isoform>
    <isoform>
        <id>O15056-3</id>
        <name>2A</name>
        <sequence type="described" ref="VSP_012912 VSP_012913"/>
    </isoform>
    <text>Additional isoforms seem to exist.</text>
</comment>
<comment type="similarity">
    <text evidence="10">Belongs to the synaptojanin family.</text>
</comment>
<comment type="similarity">
    <text evidence="10">In the central section; belongs to the inositol 1,4,5-trisphosphate 5-phosphatase family.</text>
</comment>
<comment type="sequence caution" evidence="10">
    <conflict type="erroneous initiation">
        <sequence resource="EMBL-CDS" id="AAH43277"/>
    </conflict>
    <text>Truncated N-terminus.</text>
</comment>
<dbReference type="EC" id="3.1.3.36" evidence="3"/>
<dbReference type="EMBL" id="AY152396">
    <property type="protein sequence ID" value="AAN73051.1"/>
    <property type="molecule type" value="mRNA"/>
</dbReference>
<dbReference type="EMBL" id="AF318616">
    <property type="protein sequence ID" value="AAG46036.1"/>
    <property type="molecule type" value="mRNA"/>
</dbReference>
<dbReference type="EMBL" id="AL139330">
    <property type="status" value="NOT_ANNOTATED_CDS"/>
    <property type="molecule type" value="Genomic_DNA"/>
</dbReference>
<dbReference type="EMBL" id="AF039945">
    <property type="protein sequence ID" value="AAD02178.1"/>
    <property type="molecule type" value="mRNA"/>
</dbReference>
<dbReference type="EMBL" id="AB002346">
    <property type="protein sequence ID" value="BAA20805.2"/>
    <property type="molecule type" value="mRNA"/>
</dbReference>
<dbReference type="EMBL" id="BC043277">
    <property type="protein sequence ID" value="AAH43277.1"/>
    <property type="status" value="ALT_INIT"/>
    <property type="molecule type" value="mRNA"/>
</dbReference>
<dbReference type="CCDS" id="CCDS5254.1">
    <molecule id="O15056-1"/>
</dbReference>
<dbReference type="CCDS" id="CCDS94025.1">
    <molecule id="O15056-3"/>
</dbReference>
<dbReference type="RefSeq" id="NP_001171559.1">
    <property type="nucleotide sequence ID" value="NM_001178088.1"/>
</dbReference>
<dbReference type="RefSeq" id="NP_001397876.1">
    <molecule id="O15056-3"/>
    <property type="nucleotide sequence ID" value="NM_001410947.1"/>
</dbReference>
<dbReference type="RefSeq" id="NP_003889.1">
    <molecule id="O15056-1"/>
    <property type="nucleotide sequence ID" value="NM_003898.4"/>
</dbReference>
<dbReference type="RefSeq" id="XP_006715655.1">
    <property type="nucleotide sequence ID" value="XM_006715592.3"/>
</dbReference>
<dbReference type="RefSeq" id="XP_011534527.1">
    <property type="nucleotide sequence ID" value="XM_011536225.1"/>
</dbReference>
<dbReference type="PDB" id="1UFW">
    <property type="method" value="NMR"/>
    <property type="chains" value="A=882-963"/>
</dbReference>
<dbReference type="PDBsum" id="1UFW"/>
<dbReference type="SMR" id="O15056"/>
<dbReference type="BioGRID" id="114391">
    <property type="interactions" value="48"/>
</dbReference>
<dbReference type="FunCoup" id="O15056">
    <property type="interactions" value="280"/>
</dbReference>
<dbReference type="IntAct" id="O15056">
    <property type="interactions" value="22"/>
</dbReference>
<dbReference type="MINT" id="O15056"/>
<dbReference type="STRING" id="9606.ENSP00000347792"/>
<dbReference type="ChEMBL" id="CHEMBL4523129"/>
<dbReference type="DrugCentral" id="O15056"/>
<dbReference type="GuidetoPHARMACOLOGY" id="1462"/>
<dbReference type="DEPOD" id="SYNJ2"/>
<dbReference type="GlyGen" id="O15056">
    <property type="glycosylation" value="3 sites, 1 O-linked glycan (1 site)"/>
</dbReference>
<dbReference type="iPTMnet" id="O15056"/>
<dbReference type="PhosphoSitePlus" id="O15056"/>
<dbReference type="BioMuta" id="SYNJ2"/>
<dbReference type="jPOST" id="O15056"/>
<dbReference type="MassIVE" id="O15056"/>
<dbReference type="PaxDb" id="9606-ENSP00000347792"/>
<dbReference type="PeptideAtlas" id="O15056"/>
<dbReference type="ProteomicsDB" id="48407">
    <molecule id="O15056-1"/>
</dbReference>
<dbReference type="ProteomicsDB" id="48408">
    <molecule id="O15056-2"/>
</dbReference>
<dbReference type="ProteomicsDB" id="48409">
    <molecule id="O15056-3"/>
</dbReference>
<dbReference type="Pumba" id="O15056"/>
<dbReference type="Antibodypedia" id="33432">
    <property type="antibodies" value="203 antibodies from 26 providers"/>
</dbReference>
<dbReference type="DNASU" id="8871"/>
<dbReference type="Ensembl" id="ENST00000355585.9">
    <molecule id="O15056-1"/>
    <property type="protein sequence ID" value="ENSP00000347792.4"/>
    <property type="gene ID" value="ENSG00000078269.15"/>
</dbReference>
<dbReference type="Ensembl" id="ENST00000640338.1">
    <molecule id="O15056-3"/>
    <property type="protein sequence ID" value="ENSP00000492532.1"/>
    <property type="gene ID" value="ENSG00000078269.15"/>
</dbReference>
<dbReference type="GeneID" id="8871"/>
<dbReference type="KEGG" id="hsa:8871"/>
<dbReference type="MANE-Select" id="ENST00000355585.9">
    <property type="protein sequence ID" value="ENSP00000347792.4"/>
    <property type="RefSeq nucleotide sequence ID" value="NM_003898.4"/>
    <property type="RefSeq protein sequence ID" value="NP_003889.1"/>
</dbReference>
<dbReference type="UCSC" id="uc003qqx.3">
    <molecule id="O15056-1"/>
    <property type="organism name" value="human"/>
</dbReference>
<dbReference type="AGR" id="HGNC:11504"/>
<dbReference type="CTD" id="8871"/>
<dbReference type="DisGeNET" id="8871"/>
<dbReference type="GeneCards" id="SYNJ2"/>
<dbReference type="HGNC" id="HGNC:11504">
    <property type="gene designation" value="SYNJ2"/>
</dbReference>
<dbReference type="HPA" id="ENSG00000078269">
    <property type="expression patterns" value="Tissue enriched (brain)"/>
</dbReference>
<dbReference type="MIM" id="609410">
    <property type="type" value="gene"/>
</dbReference>
<dbReference type="neXtProt" id="NX_O15056"/>
<dbReference type="OpenTargets" id="ENSG00000078269"/>
<dbReference type="PharmGKB" id="PA36286"/>
<dbReference type="VEuPathDB" id="HostDB:ENSG00000078269"/>
<dbReference type="eggNOG" id="KOG0566">
    <property type="taxonomic scope" value="Eukaryota"/>
</dbReference>
<dbReference type="GeneTree" id="ENSGT00940000160715"/>
<dbReference type="HOGENOM" id="CLU_003016_5_2_1"/>
<dbReference type="InParanoid" id="O15056"/>
<dbReference type="OMA" id="PCRYKDD"/>
<dbReference type="OrthoDB" id="1925875at2759"/>
<dbReference type="PAN-GO" id="O15056">
    <property type="GO annotations" value="8 GO annotations based on evolutionary models"/>
</dbReference>
<dbReference type="PhylomeDB" id="O15056"/>
<dbReference type="TreeFam" id="TF354311"/>
<dbReference type="BioCyc" id="MetaCyc:HS01279-MONOMER"/>
<dbReference type="PathwayCommons" id="O15056"/>
<dbReference type="Reactome" id="R-HSA-1660499">
    <property type="pathway name" value="Synthesis of PIPs at the plasma membrane"/>
</dbReference>
<dbReference type="Reactome" id="R-HSA-8856828">
    <property type="pathway name" value="Clathrin-mediated endocytosis"/>
</dbReference>
<dbReference type="SignaLink" id="O15056"/>
<dbReference type="BioGRID-ORCS" id="8871">
    <property type="hits" value="10 hits in 1169 CRISPR screens"/>
</dbReference>
<dbReference type="ChiTaRS" id="SYNJ2">
    <property type="organism name" value="human"/>
</dbReference>
<dbReference type="EvolutionaryTrace" id="O15056"/>
<dbReference type="GenomeRNAi" id="8871"/>
<dbReference type="Pharos" id="O15056">
    <property type="development level" value="Tchem"/>
</dbReference>
<dbReference type="PRO" id="PR:O15056"/>
<dbReference type="Proteomes" id="UP000005640">
    <property type="component" value="Chromosome 6"/>
</dbReference>
<dbReference type="RNAct" id="O15056">
    <property type="molecule type" value="protein"/>
</dbReference>
<dbReference type="Bgee" id="ENSG00000078269">
    <property type="expression patterns" value="Expressed in inferior vagus X ganglion and 206 other cell types or tissues"/>
</dbReference>
<dbReference type="ExpressionAtlas" id="O15056">
    <property type="expression patterns" value="baseline and differential"/>
</dbReference>
<dbReference type="GO" id="GO:0042995">
    <property type="term" value="C:cell projection"/>
    <property type="evidence" value="ECO:0007669"/>
    <property type="project" value="UniProtKB-KW"/>
</dbReference>
<dbReference type="GO" id="GO:0005737">
    <property type="term" value="C:cytoplasm"/>
    <property type="evidence" value="ECO:0000318"/>
    <property type="project" value="GO_Central"/>
</dbReference>
<dbReference type="GO" id="GO:0005856">
    <property type="term" value="C:cytoskeleton"/>
    <property type="evidence" value="ECO:0007669"/>
    <property type="project" value="UniProtKB-SubCell"/>
</dbReference>
<dbReference type="GO" id="GO:0005829">
    <property type="term" value="C:cytosol"/>
    <property type="evidence" value="ECO:0000304"/>
    <property type="project" value="Reactome"/>
</dbReference>
<dbReference type="GO" id="GO:0016020">
    <property type="term" value="C:membrane"/>
    <property type="evidence" value="ECO:0000318"/>
    <property type="project" value="GO_Central"/>
</dbReference>
<dbReference type="GO" id="GO:0045121">
    <property type="term" value="C:membrane raft"/>
    <property type="evidence" value="ECO:0007669"/>
    <property type="project" value="UniProtKB-SubCell"/>
</dbReference>
<dbReference type="GO" id="GO:0048471">
    <property type="term" value="C:perinuclear region of cytoplasm"/>
    <property type="evidence" value="ECO:0000318"/>
    <property type="project" value="GO_Central"/>
</dbReference>
<dbReference type="GO" id="GO:0005886">
    <property type="term" value="C:plasma membrane"/>
    <property type="evidence" value="ECO:0007669"/>
    <property type="project" value="UniProtKB-SubCell"/>
</dbReference>
<dbReference type="GO" id="GO:0098793">
    <property type="term" value="C:presynapse"/>
    <property type="evidence" value="ECO:0000318"/>
    <property type="project" value="GO_Central"/>
</dbReference>
<dbReference type="GO" id="GO:0052658">
    <property type="term" value="F:inositol-1,4,5-trisphosphate 5-phosphatase activity"/>
    <property type="evidence" value="ECO:0000318"/>
    <property type="project" value="GO_Central"/>
</dbReference>
<dbReference type="GO" id="GO:0034596">
    <property type="term" value="F:phosphatidylinositol phosphate 4-phosphatase activity"/>
    <property type="evidence" value="ECO:0000304"/>
    <property type="project" value="Reactome"/>
</dbReference>
<dbReference type="GO" id="GO:0052629">
    <property type="term" value="F:phosphatidylinositol-3,5-bisphosphate 3-phosphatase activity"/>
    <property type="evidence" value="ECO:0000304"/>
    <property type="project" value="Reactome"/>
</dbReference>
<dbReference type="GO" id="GO:0043813">
    <property type="term" value="F:phosphatidylinositol-3,5-bisphosphate 5-phosphatase activity"/>
    <property type="evidence" value="ECO:0000304"/>
    <property type="project" value="Reactome"/>
</dbReference>
<dbReference type="GO" id="GO:0004438">
    <property type="term" value="F:phosphatidylinositol-3-phosphate phosphatase activity"/>
    <property type="evidence" value="ECO:0000304"/>
    <property type="project" value="Reactome"/>
</dbReference>
<dbReference type="GO" id="GO:0004439">
    <property type="term" value="F:phosphatidylinositol-4,5-bisphosphate 5-phosphatase activity"/>
    <property type="evidence" value="ECO:0000318"/>
    <property type="project" value="GO_Central"/>
</dbReference>
<dbReference type="GO" id="GO:0003723">
    <property type="term" value="F:RNA binding"/>
    <property type="evidence" value="ECO:0007669"/>
    <property type="project" value="UniProtKB-KW"/>
</dbReference>
<dbReference type="GO" id="GO:0061024">
    <property type="term" value="P:membrane organization"/>
    <property type="evidence" value="ECO:0000304"/>
    <property type="project" value="Reactome"/>
</dbReference>
<dbReference type="GO" id="GO:0006661">
    <property type="term" value="P:phosphatidylinositol biosynthetic process"/>
    <property type="evidence" value="ECO:0000304"/>
    <property type="project" value="Reactome"/>
</dbReference>
<dbReference type="GO" id="GO:0046856">
    <property type="term" value="P:phosphatidylinositol dephosphorylation"/>
    <property type="evidence" value="ECO:0007669"/>
    <property type="project" value="InterPro"/>
</dbReference>
<dbReference type="GO" id="GO:0048488">
    <property type="term" value="P:synaptic vesicle endocytosis"/>
    <property type="evidence" value="ECO:0000314"/>
    <property type="project" value="SynGO"/>
</dbReference>
<dbReference type="CDD" id="cd12720">
    <property type="entry name" value="RRM_SYNJ2"/>
    <property type="match status" value="1"/>
</dbReference>
<dbReference type="FunFam" id="3.30.70.330:FF:000204">
    <property type="entry name" value="Synaptojanin 2"/>
    <property type="match status" value="1"/>
</dbReference>
<dbReference type="FunFam" id="3.60.10.10:FF:000008">
    <property type="entry name" value="Synaptojanin 2"/>
    <property type="match status" value="1"/>
</dbReference>
<dbReference type="Gene3D" id="3.30.70.330">
    <property type="match status" value="1"/>
</dbReference>
<dbReference type="Gene3D" id="3.60.10.10">
    <property type="entry name" value="Endonuclease/exonuclease/phosphatase"/>
    <property type="match status" value="1"/>
</dbReference>
<dbReference type="InterPro" id="IPR036691">
    <property type="entry name" value="Endo/exonu/phosph_ase_sf"/>
</dbReference>
<dbReference type="InterPro" id="IPR046985">
    <property type="entry name" value="IP5"/>
</dbReference>
<dbReference type="InterPro" id="IPR000300">
    <property type="entry name" value="IPPc"/>
</dbReference>
<dbReference type="InterPro" id="IPR012677">
    <property type="entry name" value="Nucleotide-bd_a/b_plait_sf"/>
</dbReference>
<dbReference type="InterPro" id="IPR035979">
    <property type="entry name" value="RBD_domain_sf"/>
</dbReference>
<dbReference type="InterPro" id="IPR000504">
    <property type="entry name" value="RRM_dom"/>
</dbReference>
<dbReference type="InterPro" id="IPR002013">
    <property type="entry name" value="SAC_dom"/>
</dbReference>
<dbReference type="InterPro" id="IPR015047">
    <property type="entry name" value="SYNJ1/2_RRM"/>
</dbReference>
<dbReference type="InterPro" id="IPR034973">
    <property type="entry name" value="SYNJ2_RRM"/>
</dbReference>
<dbReference type="PANTHER" id="PTHR11200">
    <property type="entry name" value="INOSITOL 5-PHOSPHATASE"/>
    <property type="match status" value="1"/>
</dbReference>
<dbReference type="PANTHER" id="PTHR11200:SF148">
    <property type="entry name" value="SYNAPTOJANIN-2"/>
    <property type="match status" value="1"/>
</dbReference>
<dbReference type="Pfam" id="PF08952">
    <property type="entry name" value="DUF1866"/>
    <property type="match status" value="1"/>
</dbReference>
<dbReference type="Pfam" id="PF22669">
    <property type="entry name" value="Exo_endo_phos2"/>
    <property type="match status" value="1"/>
</dbReference>
<dbReference type="Pfam" id="PF02383">
    <property type="entry name" value="Syja_N"/>
    <property type="match status" value="1"/>
</dbReference>
<dbReference type="SMART" id="SM01165">
    <property type="entry name" value="DUF1866"/>
    <property type="match status" value="1"/>
</dbReference>
<dbReference type="SMART" id="SM00128">
    <property type="entry name" value="IPPc"/>
    <property type="match status" value="1"/>
</dbReference>
<dbReference type="SUPFAM" id="SSF56219">
    <property type="entry name" value="DNase I-like"/>
    <property type="match status" value="1"/>
</dbReference>
<dbReference type="SUPFAM" id="SSF54928">
    <property type="entry name" value="RNA-binding domain, RBD"/>
    <property type="match status" value="1"/>
</dbReference>
<dbReference type="PROSITE" id="PS50102">
    <property type="entry name" value="RRM"/>
    <property type="match status" value="1"/>
</dbReference>
<dbReference type="PROSITE" id="PS50275">
    <property type="entry name" value="SAC"/>
    <property type="match status" value="1"/>
</dbReference>
<gene>
    <name type="primary">SYNJ2</name>
    <name type="synonym">KIAA0348</name>
</gene>